<feature type="chain" id="PRO_0000177387" description="Large ribosomal subunit protein bL35">
    <location>
        <begin position="1"/>
        <end position="64"/>
    </location>
</feature>
<feature type="region of interest" description="Disordered" evidence="2">
    <location>
        <begin position="1"/>
        <end position="22"/>
    </location>
</feature>
<organism>
    <name type="scientific">Mycobacterium tuberculosis (strain ATCC 25618 / H37Rv)</name>
    <dbReference type="NCBI Taxonomy" id="83332"/>
    <lineage>
        <taxon>Bacteria</taxon>
        <taxon>Bacillati</taxon>
        <taxon>Actinomycetota</taxon>
        <taxon>Actinomycetes</taxon>
        <taxon>Mycobacteriales</taxon>
        <taxon>Mycobacteriaceae</taxon>
        <taxon>Mycobacterium</taxon>
        <taxon>Mycobacterium tuberculosis complex</taxon>
    </lineage>
</organism>
<keyword id="KW-0002">3D-structure</keyword>
<keyword id="KW-1185">Reference proteome</keyword>
<keyword id="KW-0687">Ribonucleoprotein</keyword>
<keyword id="KW-0689">Ribosomal protein</keyword>
<sequence>MPKAKTHSGASKRFRRTGTGKIVRQKANRRHLLEHKPSTRTRRLDGRTVVAANDTKRVTSLLNG</sequence>
<proteinExistence type="evidence at protein level"/>
<accession>P9WH91</accession>
<accession>L0T7I2</accession>
<accession>P66271</accession>
<accession>P94976</accession>
<name>RL35_MYCTU</name>
<gene>
    <name evidence="1" type="primary">rpmI</name>
    <name type="ordered locus">Rv1642</name>
    <name type="ORF">MTCY06H11.06</name>
</gene>
<dbReference type="EMBL" id="AL123456">
    <property type="protein sequence ID" value="CCP44407.1"/>
    <property type="molecule type" value="Genomic_DNA"/>
</dbReference>
<dbReference type="PIR" id="E70619">
    <property type="entry name" value="E70619"/>
</dbReference>
<dbReference type="RefSeq" id="NP_216158.1">
    <property type="nucleotide sequence ID" value="NC_000962.3"/>
</dbReference>
<dbReference type="RefSeq" id="WP_003408106.1">
    <property type="nucleotide sequence ID" value="NZ_NVQJ01000016.1"/>
</dbReference>
<dbReference type="PDB" id="5V7Q">
    <property type="method" value="EM"/>
    <property type="resolution" value="3.70 A"/>
    <property type="chains" value="3=1-64"/>
</dbReference>
<dbReference type="PDB" id="5V93">
    <property type="method" value="EM"/>
    <property type="resolution" value="4.00 A"/>
    <property type="chains" value="3=1-64"/>
</dbReference>
<dbReference type="PDB" id="7KGB">
    <property type="method" value="EM"/>
    <property type="resolution" value="2.70 A"/>
    <property type="chains" value="3=1-64"/>
</dbReference>
<dbReference type="PDB" id="7MSC">
    <property type="method" value="EM"/>
    <property type="resolution" value="2.97 A"/>
    <property type="chains" value="3=1-64"/>
</dbReference>
<dbReference type="PDB" id="7MSH">
    <property type="method" value="EM"/>
    <property type="resolution" value="3.23 A"/>
    <property type="chains" value="3=1-64"/>
</dbReference>
<dbReference type="PDB" id="7MSM">
    <property type="method" value="EM"/>
    <property type="resolution" value="2.79 A"/>
    <property type="chains" value="3=1-64"/>
</dbReference>
<dbReference type="PDB" id="7MSZ">
    <property type="method" value="EM"/>
    <property type="resolution" value="3.10 A"/>
    <property type="chains" value="3=1-64"/>
</dbReference>
<dbReference type="PDB" id="7MT2">
    <property type="method" value="EM"/>
    <property type="resolution" value="2.76 A"/>
    <property type="chains" value="3=1-64"/>
</dbReference>
<dbReference type="PDB" id="7MT3">
    <property type="method" value="EM"/>
    <property type="resolution" value="2.80 A"/>
    <property type="chains" value="3=1-64"/>
</dbReference>
<dbReference type="PDB" id="7MT7">
    <property type="method" value="EM"/>
    <property type="resolution" value="2.71 A"/>
    <property type="chains" value="3=1-64"/>
</dbReference>
<dbReference type="PDB" id="7SFR">
    <property type="method" value="EM"/>
    <property type="resolution" value="2.60 A"/>
    <property type="chains" value="3=1-64"/>
</dbReference>
<dbReference type="PDBsum" id="5V7Q"/>
<dbReference type="PDBsum" id="5V93"/>
<dbReference type="PDBsum" id="7KGB"/>
<dbReference type="PDBsum" id="7MSC"/>
<dbReference type="PDBsum" id="7MSH"/>
<dbReference type="PDBsum" id="7MSM"/>
<dbReference type="PDBsum" id="7MSZ"/>
<dbReference type="PDBsum" id="7MT2"/>
<dbReference type="PDBsum" id="7MT3"/>
<dbReference type="PDBsum" id="7MT7"/>
<dbReference type="PDBsum" id="7SFR"/>
<dbReference type="EMDB" id="EMD-22865"/>
<dbReference type="EMDB" id="EMD-23961"/>
<dbReference type="EMDB" id="EMD-23962"/>
<dbReference type="EMDB" id="EMD-23969"/>
<dbReference type="EMDB" id="EMD-23972"/>
<dbReference type="EMDB" id="EMD-23974"/>
<dbReference type="EMDB" id="EMD-23975"/>
<dbReference type="EMDB" id="EMD-23976"/>
<dbReference type="EMDB" id="EMD-8645"/>
<dbReference type="SMR" id="P9WH91"/>
<dbReference type="FunCoup" id="P9WH91">
    <property type="interactions" value="102"/>
</dbReference>
<dbReference type="STRING" id="83332.Rv1642"/>
<dbReference type="PaxDb" id="83332-Rv1642"/>
<dbReference type="DNASU" id="885145"/>
<dbReference type="GeneID" id="45425612"/>
<dbReference type="GeneID" id="885145"/>
<dbReference type="KEGG" id="mtu:Rv1642"/>
<dbReference type="KEGG" id="mtv:RVBD_1642"/>
<dbReference type="TubercuList" id="Rv1642"/>
<dbReference type="eggNOG" id="COG0291">
    <property type="taxonomic scope" value="Bacteria"/>
</dbReference>
<dbReference type="InParanoid" id="P9WH91"/>
<dbReference type="OrthoDB" id="9804851at2"/>
<dbReference type="PhylomeDB" id="P9WH91"/>
<dbReference type="PRO" id="PR:P9WH91"/>
<dbReference type="Proteomes" id="UP000001584">
    <property type="component" value="Chromosome"/>
</dbReference>
<dbReference type="GO" id="GO:0022625">
    <property type="term" value="C:cytosolic large ribosomal subunit"/>
    <property type="evidence" value="ECO:0000318"/>
    <property type="project" value="GO_Central"/>
</dbReference>
<dbReference type="GO" id="GO:0003735">
    <property type="term" value="F:structural constituent of ribosome"/>
    <property type="evidence" value="ECO:0000318"/>
    <property type="project" value="GO_Central"/>
</dbReference>
<dbReference type="GO" id="GO:0006412">
    <property type="term" value="P:translation"/>
    <property type="evidence" value="ECO:0007669"/>
    <property type="project" value="UniProtKB-UniRule"/>
</dbReference>
<dbReference type="FunFam" id="4.10.410.60:FF:000001">
    <property type="entry name" value="50S ribosomal protein L35"/>
    <property type="match status" value="1"/>
</dbReference>
<dbReference type="Gene3D" id="4.10.410.60">
    <property type="match status" value="1"/>
</dbReference>
<dbReference type="HAMAP" id="MF_00514">
    <property type="entry name" value="Ribosomal_bL35"/>
    <property type="match status" value="1"/>
</dbReference>
<dbReference type="InterPro" id="IPR001706">
    <property type="entry name" value="Ribosomal_bL35"/>
</dbReference>
<dbReference type="InterPro" id="IPR021137">
    <property type="entry name" value="Ribosomal_bL35-like"/>
</dbReference>
<dbReference type="InterPro" id="IPR018265">
    <property type="entry name" value="Ribosomal_bL35_CS"/>
</dbReference>
<dbReference type="InterPro" id="IPR037229">
    <property type="entry name" value="Ribosomal_bL35_sf"/>
</dbReference>
<dbReference type="NCBIfam" id="TIGR00001">
    <property type="entry name" value="rpmI_bact"/>
    <property type="match status" value="1"/>
</dbReference>
<dbReference type="PANTHER" id="PTHR33343">
    <property type="entry name" value="54S RIBOSOMAL PROTEIN BL35M"/>
    <property type="match status" value="1"/>
</dbReference>
<dbReference type="PANTHER" id="PTHR33343:SF1">
    <property type="entry name" value="LARGE RIBOSOMAL SUBUNIT PROTEIN BL35M"/>
    <property type="match status" value="1"/>
</dbReference>
<dbReference type="Pfam" id="PF01632">
    <property type="entry name" value="Ribosomal_L35p"/>
    <property type="match status" value="1"/>
</dbReference>
<dbReference type="PRINTS" id="PR00064">
    <property type="entry name" value="RIBOSOMALL35"/>
</dbReference>
<dbReference type="SUPFAM" id="SSF143034">
    <property type="entry name" value="L35p-like"/>
    <property type="match status" value="1"/>
</dbReference>
<dbReference type="PROSITE" id="PS00936">
    <property type="entry name" value="RIBOSOMAL_L35"/>
    <property type="match status" value="1"/>
</dbReference>
<comment type="similarity">
    <text evidence="1">Belongs to the bacterial ribosomal protein bL35 family.</text>
</comment>
<evidence type="ECO:0000255" key="1">
    <source>
        <dbReference type="HAMAP-Rule" id="MF_00514"/>
    </source>
</evidence>
<evidence type="ECO:0000256" key="2">
    <source>
        <dbReference type="SAM" id="MobiDB-lite"/>
    </source>
</evidence>
<evidence type="ECO:0000305" key="3"/>
<protein>
    <recommendedName>
        <fullName evidence="1">Large ribosomal subunit protein bL35</fullName>
    </recommendedName>
    <alternativeName>
        <fullName evidence="3">50S ribosomal protein L35</fullName>
    </alternativeName>
</protein>
<reference key="1">
    <citation type="journal article" date="1998" name="Nature">
        <title>Deciphering the biology of Mycobacterium tuberculosis from the complete genome sequence.</title>
        <authorList>
            <person name="Cole S.T."/>
            <person name="Brosch R."/>
            <person name="Parkhill J."/>
            <person name="Garnier T."/>
            <person name="Churcher C.M."/>
            <person name="Harris D.E."/>
            <person name="Gordon S.V."/>
            <person name="Eiglmeier K."/>
            <person name="Gas S."/>
            <person name="Barry C.E. III"/>
            <person name="Tekaia F."/>
            <person name="Badcock K."/>
            <person name="Basham D."/>
            <person name="Brown D."/>
            <person name="Chillingworth T."/>
            <person name="Connor R."/>
            <person name="Davies R.M."/>
            <person name="Devlin K."/>
            <person name="Feltwell T."/>
            <person name="Gentles S."/>
            <person name="Hamlin N."/>
            <person name="Holroyd S."/>
            <person name="Hornsby T."/>
            <person name="Jagels K."/>
            <person name="Krogh A."/>
            <person name="McLean J."/>
            <person name="Moule S."/>
            <person name="Murphy L.D."/>
            <person name="Oliver S."/>
            <person name="Osborne J."/>
            <person name="Quail M.A."/>
            <person name="Rajandream M.A."/>
            <person name="Rogers J."/>
            <person name="Rutter S."/>
            <person name="Seeger K."/>
            <person name="Skelton S."/>
            <person name="Squares S."/>
            <person name="Squares R."/>
            <person name="Sulston J.E."/>
            <person name="Taylor K."/>
            <person name="Whitehead S."/>
            <person name="Barrell B.G."/>
        </authorList>
    </citation>
    <scope>NUCLEOTIDE SEQUENCE [LARGE SCALE GENOMIC DNA]</scope>
    <source>
        <strain>ATCC 25618 / H37Rv</strain>
    </source>
</reference>
<reference key="2">
    <citation type="journal article" date="2011" name="Mol. Cell. Proteomics">
        <title>Proteogenomic analysis of Mycobacterium tuberculosis by high resolution mass spectrometry.</title>
        <authorList>
            <person name="Kelkar D.S."/>
            <person name="Kumar D."/>
            <person name="Kumar P."/>
            <person name="Balakrishnan L."/>
            <person name="Muthusamy B."/>
            <person name="Yadav A.K."/>
            <person name="Shrivastava P."/>
            <person name="Marimuthu A."/>
            <person name="Anand S."/>
            <person name="Sundaram H."/>
            <person name="Kingsbury R."/>
            <person name="Harsha H.C."/>
            <person name="Nair B."/>
            <person name="Prasad T.S."/>
            <person name="Chauhan D.S."/>
            <person name="Katoch K."/>
            <person name="Katoch V.M."/>
            <person name="Kumar P."/>
            <person name="Chaerkady R."/>
            <person name="Ramachandran S."/>
            <person name="Dash D."/>
            <person name="Pandey A."/>
        </authorList>
    </citation>
    <scope>IDENTIFICATION BY MASS SPECTROMETRY [LARGE SCALE ANALYSIS]</scope>
    <source>
        <strain>ATCC 25618 / H37Rv</strain>
    </source>
</reference>